<protein>
    <recommendedName>
        <fullName evidence="1">Large ribosomal subunit protein uL4</fullName>
    </recommendedName>
    <alternativeName>
        <fullName evidence="2">50S ribosomal protein L4</fullName>
    </alternativeName>
</protein>
<comment type="function">
    <text evidence="1">One of the primary rRNA binding proteins, this protein initially binds near the 5'-end of the 23S rRNA. It is important during the early stages of 50S assembly. It makes multiple contacts with different domains of the 23S rRNA in the assembled 50S subunit and ribosome.</text>
</comment>
<comment type="function">
    <text evidence="1">Forms part of the polypeptide exit tunnel.</text>
</comment>
<comment type="subunit">
    <text evidence="1">Part of the 50S ribosomal subunit.</text>
</comment>
<comment type="similarity">
    <text evidence="1">Belongs to the universal ribosomal protein uL4 family.</text>
</comment>
<name>RL4_ERYLH</name>
<organism>
    <name type="scientific">Erythrobacter litoralis (strain HTCC2594)</name>
    <dbReference type="NCBI Taxonomy" id="314225"/>
    <lineage>
        <taxon>Bacteria</taxon>
        <taxon>Pseudomonadati</taxon>
        <taxon>Pseudomonadota</taxon>
        <taxon>Alphaproteobacteria</taxon>
        <taxon>Sphingomonadales</taxon>
        <taxon>Erythrobacteraceae</taxon>
        <taxon>Erythrobacter/Porphyrobacter group</taxon>
        <taxon>Erythrobacter</taxon>
    </lineage>
</organism>
<proteinExistence type="inferred from homology"/>
<keyword id="KW-1185">Reference proteome</keyword>
<keyword id="KW-0687">Ribonucleoprotein</keyword>
<keyword id="KW-0689">Ribosomal protein</keyword>
<keyword id="KW-0694">RNA-binding</keyword>
<keyword id="KW-0699">rRNA-binding</keyword>
<gene>
    <name evidence="1" type="primary">rplD</name>
    <name type="ordered locus">ELI_08185</name>
</gene>
<accession>Q2N9B2</accession>
<reference key="1">
    <citation type="journal article" date="2009" name="J. Bacteriol.">
        <title>Complete genome sequence of Erythrobacter litoralis HTCC2594.</title>
        <authorList>
            <person name="Oh H.M."/>
            <person name="Giovannoni S.J."/>
            <person name="Ferriera S."/>
            <person name="Johnson J."/>
            <person name="Cho J.C."/>
        </authorList>
    </citation>
    <scope>NUCLEOTIDE SEQUENCE [LARGE SCALE GENOMIC DNA]</scope>
    <source>
        <strain>HTCC2594</strain>
    </source>
</reference>
<feature type="chain" id="PRO_1000052399" description="Large ribosomal subunit protein uL4">
    <location>
        <begin position="1"/>
        <end position="207"/>
    </location>
</feature>
<evidence type="ECO:0000255" key="1">
    <source>
        <dbReference type="HAMAP-Rule" id="MF_01328"/>
    </source>
</evidence>
<evidence type="ECO:0000305" key="2"/>
<sequence length="207" mass="22258">MKVKVQKIDGKAAGDVELDDAVFGVEPRADILHRVVTWQLENRRGTARPTRERSDVARTGAKFGRQKGSGNARHGDRGAPIFIGGGKAHGARKRDFNPSLNKKIRALGLKMALSSKAKDGLVVVDSLDLKDAKTKVLKGHFDKAGWNGKVLVIDGESVNEGFSKAAGNLPGVNVLPAMGANVYDILKHDTLVLTKDAVEKLEARFNG</sequence>
<dbReference type="EMBL" id="CP000157">
    <property type="protein sequence ID" value="ABC63729.1"/>
    <property type="molecule type" value="Genomic_DNA"/>
</dbReference>
<dbReference type="RefSeq" id="WP_011414561.1">
    <property type="nucleotide sequence ID" value="NC_007722.1"/>
</dbReference>
<dbReference type="SMR" id="Q2N9B2"/>
<dbReference type="STRING" id="314225.ELI_08185"/>
<dbReference type="KEGG" id="eli:ELI_08185"/>
<dbReference type="eggNOG" id="COG0088">
    <property type="taxonomic scope" value="Bacteria"/>
</dbReference>
<dbReference type="HOGENOM" id="CLU_041575_5_1_5"/>
<dbReference type="OrthoDB" id="9803201at2"/>
<dbReference type="Proteomes" id="UP000008808">
    <property type="component" value="Chromosome"/>
</dbReference>
<dbReference type="GO" id="GO:1990904">
    <property type="term" value="C:ribonucleoprotein complex"/>
    <property type="evidence" value="ECO:0007669"/>
    <property type="project" value="UniProtKB-KW"/>
</dbReference>
<dbReference type="GO" id="GO:0005840">
    <property type="term" value="C:ribosome"/>
    <property type="evidence" value="ECO:0007669"/>
    <property type="project" value="UniProtKB-KW"/>
</dbReference>
<dbReference type="GO" id="GO:0019843">
    <property type="term" value="F:rRNA binding"/>
    <property type="evidence" value="ECO:0007669"/>
    <property type="project" value="UniProtKB-UniRule"/>
</dbReference>
<dbReference type="GO" id="GO:0003735">
    <property type="term" value="F:structural constituent of ribosome"/>
    <property type="evidence" value="ECO:0007669"/>
    <property type="project" value="InterPro"/>
</dbReference>
<dbReference type="GO" id="GO:0006412">
    <property type="term" value="P:translation"/>
    <property type="evidence" value="ECO:0007669"/>
    <property type="project" value="UniProtKB-UniRule"/>
</dbReference>
<dbReference type="Gene3D" id="3.40.1370.10">
    <property type="match status" value="1"/>
</dbReference>
<dbReference type="HAMAP" id="MF_01328_B">
    <property type="entry name" value="Ribosomal_uL4_B"/>
    <property type="match status" value="1"/>
</dbReference>
<dbReference type="InterPro" id="IPR002136">
    <property type="entry name" value="Ribosomal_uL4"/>
</dbReference>
<dbReference type="InterPro" id="IPR013005">
    <property type="entry name" value="Ribosomal_uL4-like"/>
</dbReference>
<dbReference type="InterPro" id="IPR023574">
    <property type="entry name" value="Ribosomal_uL4_dom_sf"/>
</dbReference>
<dbReference type="NCBIfam" id="TIGR03953">
    <property type="entry name" value="rplD_bact"/>
    <property type="match status" value="1"/>
</dbReference>
<dbReference type="PANTHER" id="PTHR10746">
    <property type="entry name" value="50S RIBOSOMAL PROTEIN L4"/>
    <property type="match status" value="1"/>
</dbReference>
<dbReference type="PANTHER" id="PTHR10746:SF6">
    <property type="entry name" value="LARGE RIBOSOMAL SUBUNIT PROTEIN UL4M"/>
    <property type="match status" value="1"/>
</dbReference>
<dbReference type="Pfam" id="PF00573">
    <property type="entry name" value="Ribosomal_L4"/>
    <property type="match status" value="1"/>
</dbReference>
<dbReference type="SUPFAM" id="SSF52166">
    <property type="entry name" value="Ribosomal protein L4"/>
    <property type="match status" value="1"/>
</dbReference>